<reference key="1">
    <citation type="journal article" date="1996" name="Science">
        <title>Complete genome sequence of the methanogenic archaeon, Methanococcus jannaschii.</title>
        <authorList>
            <person name="Bult C.J."/>
            <person name="White O."/>
            <person name="Olsen G.J."/>
            <person name="Zhou L."/>
            <person name="Fleischmann R.D."/>
            <person name="Sutton G.G."/>
            <person name="Blake J.A."/>
            <person name="FitzGerald L.M."/>
            <person name="Clayton R.A."/>
            <person name="Gocayne J.D."/>
            <person name="Kerlavage A.R."/>
            <person name="Dougherty B.A."/>
            <person name="Tomb J.-F."/>
            <person name="Adams M.D."/>
            <person name="Reich C.I."/>
            <person name="Overbeek R."/>
            <person name="Kirkness E.F."/>
            <person name="Weinstock K.G."/>
            <person name="Merrick J.M."/>
            <person name="Glodek A."/>
            <person name="Scott J.L."/>
            <person name="Geoghagen N.S.M."/>
            <person name="Weidman J.F."/>
            <person name="Fuhrmann J.L."/>
            <person name="Nguyen D."/>
            <person name="Utterback T.R."/>
            <person name="Kelley J.M."/>
            <person name="Peterson J.D."/>
            <person name="Sadow P.W."/>
            <person name="Hanna M.C."/>
            <person name="Cotton M.D."/>
            <person name="Roberts K.M."/>
            <person name="Hurst M.A."/>
            <person name="Kaine B.P."/>
            <person name="Borodovsky M."/>
            <person name="Klenk H.-P."/>
            <person name="Fraser C.M."/>
            <person name="Smith H.O."/>
            <person name="Woese C.R."/>
            <person name="Venter J.C."/>
        </authorList>
    </citation>
    <scope>NUCLEOTIDE SEQUENCE [LARGE SCALE GENOMIC DNA]</scope>
    <source>
        <strain>ATCC 43067 / DSM 2661 / JAL-1 / JCM 10045 / NBRC 100440</strain>
    </source>
</reference>
<protein>
    <recommendedName>
        <fullName>Phosphoribosylformylglycinamidine cyclo-ligase</fullName>
        <ecNumber>6.3.3.1</ecNumber>
    </recommendedName>
    <alternativeName>
        <fullName>AIR synthase</fullName>
    </alternativeName>
    <alternativeName>
        <fullName>AIRS</fullName>
    </alternativeName>
    <alternativeName>
        <fullName>Phosphoribosyl-aminoimidazole synthetase</fullName>
    </alternativeName>
</protein>
<organism>
    <name type="scientific">Methanocaldococcus jannaschii (strain ATCC 43067 / DSM 2661 / JAL-1 / JCM 10045 / NBRC 100440)</name>
    <name type="common">Methanococcus jannaschii</name>
    <dbReference type="NCBI Taxonomy" id="243232"/>
    <lineage>
        <taxon>Archaea</taxon>
        <taxon>Methanobacteriati</taxon>
        <taxon>Methanobacteriota</taxon>
        <taxon>Methanomada group</taxon>
        <taxon>Methanococci</taxon>
        <taxon>Methanococcales</taxon>
        <taxon>Methanocaldococcaceae</taxon>
        <taxon>Methanocaldococcus</taxon>
    </lineage>
</organism>
<accession>Q57656</accession>
<evidence type="ECO:0000250" key="1"/>
<evidence type="ECO:0000305" key="2"/>
<feature type="chain" id="PRO_0000148281" description="Phosphoribosylformylglycinamidine cyclo-ligase">
    <location>
        <begin position="1"/>
        <end position="350"/>
    </location>
</feature>
<dbReference type="EC" id="6.3.3.1"/>
<dbReference type="EMBL" id="L77117">
    <property type="protein sequence ID" value="AAB98187.1"/>
    <property type="molecule type" value="Genomic_DNA"/>
</dbReference>
<dbReference type="PIR" id="D64325">
    <property type="entry name" value="D64325"/>
</dbReference>
<dbReference type="RefSeq" id="WP_010869698.1">
    <property type="nucleotide sequence ID" value="NC_000909.1"/>
</dbReference>
<dbReference type="SMR" id="Q57656"/>
<dbReference type="FunCoup" id="Q57656">
    <property type="interactions" value="133"/>
</dbReference>
<dbReference type="STRING" id="243232.MJ_0203"/>
<dbReference type="PaxDb" id="243232-MJ_0203"/>
<dbReference type="EnsemblBacteria" id="AAB98187">
    <property type="protein sequence ID" value="AAB98187"/>
    <property type="gene ID" value="MJ_0203"/>
</dbReference>
<dbReference type="GeneID" id="1451052"/>
<dbReference type="KEGG" id="mja:MJ_0203"/>
<dbReference type="eggNOG" id="arCOG00639">
    <property type="taxonomic scope" value="Archaea"/>
</dbReference>
<dbReference type="HOGENOM" id="CLU_047116_0_0_2"/>
<dbReference type="InParanoid" id="Q57656"/>
<dbReference type="OrthoDB" id="6605at2157"/>
<dbReference type="PhylomeDB" id="Q57656"/>
<dbReference type="UniPathway" id="UPA00074">
    <property type="reaction ID" value="UER00129"/>
</dbReference>
<dbReference type="Proteomes" id="UP000000805">
    <property type="component" value="Chromosome"/>
</dbReference>
<dbReference type="GO" id="GO:0005829">
    <property type="term" value="C:cytosol"/>
    <property type="evidence" value="ECO:0000318"/>
    <property type="project" value="GO_Central"/>
</dbReference>
<dbReference type="GO" id="GO:0005524">
    <property type="term" value="F:ATP binding"/>
    <property type="evidence" value="ECO:0007669"/>
    <property type="project" value="UniProtKB-KW"/>
</dbReference>
<dbReference type="GO" id="GO:0004637">
    <property type="term" value="F:phosphoribosylamine-glycine ligase activity"/>
    <property type="evidence" value="ECO:0000318"/>
    <property type="project" value="GO_Central"/>
</dbReference>
<dbReference type="GO" id="GO:0004641">
    <property type="term" value="F:phosphoribosylformylglycinamidine cyclo-ligase activity"/>
    <property type="evidence" value="ECO:0000318"/>
    <property type="project" value="GO_Central"/>
</dbReference>
<dbReference type="GO" id="GO:0006189">
    <property type="term" value="P:'de novo' IMP biosynthetic process"/>
    <property type="evidence" value="ECO:0007669"/>
    <property type="project" value="UniProtKB-UniRule"/>
</dbReference>
<dbReference type="GO" id="GO:0046084">
    <property type="term" value="P:adenine biosynthetic process"/>
    <property type="evidence" value="ECO:0000318"/>
    <property type="project" value="GO_Central"/>
</dbReference>
<dbReference type="GO" id="GO:0006164">
    <property type="term" value="P:purine nucleotide biosynthetic process"/>
    <property type="evidence" value="ECO:0000318"/>
    <property type="project" value="GO_Central"/>
</dbReference>
<dbReference type="CDD" id="cd02196">
    <property type="entry name" value="PurM"/>
    <property type="match status" value="1"/>
</dbReference>
<dbReference type="FunFam" id="3.30.1330.10:FF:000020">
    <property type="entry name" value="Phosphoribosylformylglycinamidine cyclo-ligase"/>
    <property type="match status" value="1"/>
</dbReference>
<dbReference type="FunFam" id="3.90.650.10:FF:000011">
    <property type="entry name" value="Phosphoribosylformylglycinamidine cyclo-ligase"/>
    <property type="match status" value="1"/>
</dbReference>
<dbReference type="Gene3D" id="3.90.650.10">
    <property type="entry name" value="PurM-like C-terminal domain"/>
    <property type="match status" value="1"/>
</dbReference>
<dbReference type="Gene3D" id="3.30.1330.10">
    <property type="entry name" value="PurM-like, N-terminal domain"/>
    <property type="match status" value="1"/>
</dbReference>
<dbReference type="HAMAP" id="MF_00741">
    <property type="entry name" value="AIRS"/>
    <property type="match status" value="1"/>
</dbReference>
<dbReference type="InterPro" id="IPR010918">
    <property type="entry name" value="PurM-like_C_dom"/>
</dbReference>
<dbReference type="InterPro" id="IPR036676">
    <property type="entry name" value="PurM-like_C_sf"/>
</dbReference>
<dbReference type="InterPro" id="IPR016188">
    <property type="entry name" value="PurM-like_N"/>
</dbReference>
<dbReference type="InterPro" id="IPR036921">
    <property type="entry name" value="PurM-like_N_sf"/>
</dbReference>
<dbReference type="InterPro" id="IPR004733">
    <property type="entry name" value="PurM_cligase"/>
</dbReference>
<dbReference type="NCBIfam" id="TIGR00878">
    <property type="entry name" value="purM"/>
    <property type="match status" value="1"/>
</dbReference>
<dbReference type="PANTHER" id="PTHR10520:SF12">
    <property type="entry name" value="TRIFUNCTIONAL PURINE BIOSYNTHETIC PROTEIN ADENOSINE-3"/>
    <property type="match status" value="1"/>
</dbReference>
<dbReference type="PANTHER" id="PTHR10520">
    <property type="entry name" value="TRIFUNCTIONAL PURINE BIOSYNTHETIC PROTEIN ADENOSINE-3-RELATED"/>
    <property type="match status" value="1"/>
</dbReference>
<dbReference type="Pfam" id="PF00586">
    <property type="entry name" value="AIRS"/>
    <property type="match status" value="1"/>
</dbReference>
<dbReference type="Pfam" id="PF02769">
    <property type="entry name" value="AIRS_C"/>
    <property type="match status" value="1"/>
</dbReference>
<dbReference type="SUPFAM" id="SSF56042">
    <property type="entry name" value="PurM C-terminal domain-like"/>
    <property type="match status" value="1"/>
</dbReference>
<dbReference type="SUPFAM" id="SSF55326">
    <property type="entry name" value="PurM N-terminal domain-like"/>
    <property type="match status" value="1"/>
</dbReference>
<gene>
    <name type="primary">purM</name>
    <name type="ordered locus">MJ0203</name>
</gene>
<comment type="catalytic activity">
    <reaction>
        <text>2-formamido-N(1)-(5-O-phospho-beta-D-ribosyl)acetamidine + ATP = 5-amino-1-(5-phospho-beta-D-ribosyl)imidazole + ADP + phosphate + H(+)</text>
        <dbReference type="Rhea" id="RHEA:23032"/>
        <dbReference type="ChEBI" id="CHEBI:15378"/>
        <dbReference type="ChEBI" id="CHEBI:30616"/>
        <dbReference type="ChEBI" id="CHEBI:43474"/>
        <dbReference type="ChEBI" id="CHEBI:137981"/>
        <dbReference type="ChEBI" id="CHEBI:147287"/>
        <dbReference type="ChEBI" id="CHEBI:456216"/>
        <dbReference type="EC" id="6.3.3.1"/>
    </reaction>
</comment>
<comment type="pathway">
    <text>Purine metabolism; IMP biosynthesis via de novo pathway; 5-amino-1-(5-phospho-D-ribosyl)imidazole from N(2)-formyl-N(1)-(5-phospho-D-ribosyl)glycinamide: step 2/2.</text>
</comment>
<comment type="subcellular location">
    <subcellularLocation>
        <location evidence="1">Cytoplasm</location>
    </subcellularLocation>
</comment>
<comment type="similarity">
    <text evidence="2">Belongs to the AIR synthase family.</text>
</comment>
<sequence>MVTYKDAGVDISHEDKVIKALVSQITFKRSDIKPAELGLHYAGAVEFGDYYLVLSTDGVGSKMIVAEMANKFDTVGIDMIAMNVNDAICIGAEPIALVDYLAVGHITEEIAEQIGKGLNEGAKEANINIVGGETATLPDMIKGIDLAGTVLAIVKKDEIITGKDVKAGDVIVGLRSSGIHSNGLSLARKVFFDIAKLDINDKLSYGKTVAEELLTPTRIYVKPVLEMIRDKDIEVKGLAHITGGSFRKLKRLNDKVTYYIDNLPEPLPIFKEIQRLGNVPDEEMFRTFNMGIGFCVIVDEEDANKVIKIANKYNIPAQVIGRVVDSLEVNGNKIVGKAVVKYNDKHIILE</sequence>
<keyword id="KW-0067">ATP-binding</keyword>
<keyword id="KW-0963">Cytoplasm</keyword>
<keyword id="KW-0436">Ligase</keyword>
<keyword id="KW-0547">Nucleotide-binding</keyword>
<keyword id="KW-0658">Purine biosynthesis</keyword>
<keyword id="KW-1185">Reference proteome</keyword>
<proteinExistence type="inferred from homology"/>
<name>PUR5_METJA</name>